<name>NAGB_THEPX</name>
<keyword id="KW-0119">Carbohydrate metabolism</keyword>
<keyword id="KW-0378">Hydrolase</keyword>
<sequence length="253" mass="28412">MKVIITVNYEEMSKKAAEIVKKQIKEKPNTVLGLATGSTPLGMYKHLIEMYKRGEIDFSNVITFNLDEYIGLSPDHPQSYHYFMFHNFFNHINIKKENVHIPNGIAEDLEEECRKYEEEIEKAGGIDLQILGIGINGHIGFNEPDESIETKTHVVTLTEKTINANKRFFKSAEEVPRKAITMGLGSIMKAKKIVLLASGKNKAEAIKETIKGQLTTKVPATVLALHHDVTIIIDKEAASLIPDEDLKEIEVIV</sequence>
<feature type="chain" id="PRO_1000139799" description="Glucosamine-6-phosphate deaminase">
    <location>
        <begin position="1"/>
        <end position="253"/>
    </location>
</feature>
<feature type="active site" description="Proton acceptor; for enolization step" evidence="1">
    <location>
        <position position="67"/>
    </location>
</feature>
<feature type="active site" description="For ring-opening step" evidence="1">
    <location>
        <position position="136"/>
    </location>
</feature>
<feature type="active site" description="Proton acceptor; for ring-opening step" evidence="1">
    <location>
        <position position="138"/>
    </location>
</feature>
<feature type="active site" description="For ring-opening step" evidence="1">
    <location>
        <position position="143"/>
    </location>
</feature>
<dbReference type="EC" id="3.5.99.6" evidence="1"/>
<dbReference type="EMBL" id="CP000923">
    <property type="protein sequence ID" value="ABY92722.1"/>
    <property type="molecule type" value="Genomic_DNA"/>
</dbReference>
<dbReference type="RefSeq" id="WP_003868752.1">
    <property type="nucleotide sequence ID" value="NC_010320.1"/>
</dbReference>
<dbReference type="SMR" id="B0K0J7"/>
<dbReference type="KEGG" id="tex:Teth514_1433"/>
<dbReference type="HOGENOM" id="CLU_049611_1_1_9"/>
<dbReference type="UniPathway" id="UPA00629">
    <property type="reaction ID" value="UER00684"/>
</dbReference>
<dbReference type="Proteomes" id="UP000002155">
    <property type="component" value="Chromosome"/>
</dbReference>
<dbReference type="GO" id="GO:0005737">
    <property type="term" value="C:cytoplasm"/>
    <property type="evidence" value="ECO:0007669"/>
    <property type="project" value="TreeGrafter"/>
</dbReference>
<dbReference type="GO" id="GO:0004342">
    <property type="term" value="F:glucosamine-6-phosphate deaminase activity"/>
    <property type="evidence" value="ECO:0007669"/>
    <property type="project" value="UniProtKB-UniRule"/>
</dbReference>
<dbReference type="GO" id="GO:0042802">
    <property type="term" value="F:identical protein binding"/>
    <property type="evidence" value="ECO:0007669"/>
    <property type="project" value="TreeGrafter"/>
</dbReference>
<dbReference type="GO" id="GO:0005975">
    <property type="term" value="P:carbohydrate metabolic process"/>
    <property type="evidence" value="ECO:0007669"/>
    <property type="project" value="InterPro"/>
</dbReference>
<dbReference type="GO" id="GO:0006043">
    <property type="term" value="P:glucosamine catabolic process"/>
    <property type="evidence" value="ECO:0007669"/>
    <property type="project" value="TreeGrafter"/>
</dbReference>
<dbReference type="GO" id="GO:0006046">
    <property type="term" value="P:N-acetylglucosamine catabolic process"/>
    <property type="evidence" value="ECO:0007669"/>
    <property type="project" value="TreeGrafter"/>
</dbReference>
<dbReference type="GO" id="GO:0019262">
    <property type="term" value="P:N-acetylneuraminate catabolic process"/>
    <property type="evidence" value="ECO:0007669"/>
    <property type="project" value="UniProtKB-UniRule"/>
</dbReference>
<dbReference type="CDD" id="cd01399">
    <property type="entry name" value="GlcN6P_deaminase"/>
    <property type="match status" value="1"/>
</dbReference>
<dbReference type="FunFam" id="3.40.50.1360:FF:000003">
    <property type="entry name" value="Glucosamine-6-phosphate deaminase"/>
    <property type="match status" value="1"/>
</dbReference>
<dbReference type="Gene3D" id="3.40.50.1360">
    <property type="match status" value="1"/>
</dbReference>
<dbReference type="HAMAP" id="MF_01241">
    <property type="entry name" value="GlcN6P_deamin"/>
    <property type="match status" value="1"/>
</dbReference>
<dbReference type="InterPro" id="IPR006148">
    <property type="entry name" value="Glc/Gal-6P_isomerase"/>
</dbReference>
<dbReference type="InterPro" id="IPR004547">
    <property type="entry name" value="Glucosamine6P_isomerase"/>
</dbReference>
<dbReference type="InterPro" id="IPR018321">
    <property type="entry name" value="Glucosamine6P_isomerase_CS"/>
</dbReference>
<dbReference type="InterPro" id="IPR037171">
    <property type="entry name" value="NagB/RpiA_transferase-like"/>
</dbReference>
<dbReference type="NCBIfam" id="TIGR00502">
    <property type="entry name" value="nagB"/>
    <property type="match status" value="1"/>
</dbReference>
<dbReference type="NCBIfam" id="NF001684">
    <property type="entry name" value="PRK00443.1-4"/>
    <property type="match status" value="1"/>
</dbReference>
<dbReference type="PANTHER" id="PTHR11280">
    <property type="entry name" value="GLUCOSAMINE-6-PHOSPHATE ISOMERASE"/>
    <property type="match status" value="1"/>
</dbReference>
<dbReference type="PANTHER" id="PTHR11280:SF5">
    <property type="entry name" value="GLUCOSAMINE-6-PHOSPHATE ISOMERASE"/>
    <property type="match status" value="1"/>
</dbReference>
<dbReference type="Pfam" id="PF01182">
    <property type="entry name" value="Glucosamine_iso"/>
    <property type="match status" value="1"/>
</dbReference>
<dbReference type="SUPFAM" id="SSF100950">
    <property type="entry name" value="NagB/RpiA/CoA transferase-like"/>
    <property type="match status" value="1"/>
</dbReference>
<dbReference type="PROSITE" id="PS01161">
    <property type="entry name" value="GLC_GALNAC_ISOMERASE"/>
    <property type="match status" value="1"/>
</dbReference>
<gene>
    <name evidence="1" type="primary">nagB</name>
    <name type="ordered locus">Teth514_1433</name>
</gene>
<protein>
    <recommendedName>
        <fullName evidence="1">Glucosamine-6-phosphate deaminase</fullName>
        <ecNumber evidence="1">3.5.99.6</ecNumber>
    </recommendedName>
    <alternativeName>
        <fullName evidence="1">GlcN6P deaminase</fullName>
        <shortName evidence="1">GNPDA</shortName>
    </alternativeName>
    <alternativeName>
        <fullName evidence="1">Glucosamine-6-phosphate isomerase</fullName>
    </alternativeName>
</protein>
<reference key="1">
    <citation type="submission" date="2008-01" db="EMBL/GenBank/DDBJ databases">
        <title>Complete sequence of Thermoanaerobacter sp. X514.</title>
        <authorList>
            <consortium name="US DOE Joint Genome Institute"/>
            <person name="Copeland A."/>
            <person name="Lucas S."/>
            <person name="Lapidus A."/>
            <person name="Barry K."/>
            <person name="Glavina del Rio T."/>
            <person name="Dalin E."/>
            <person name="Tice H."/>
            <person name="Pitluck S."/>
            <person name="Bruce D."/>
            <person name="Goodwin L."/>
            <person name="Saunders E."/>
            <person name="Brettin T."/>
            <person name="Detter J.C."/>
            <person name="Han C."/>
            <person name="Schmutz J."/>
            <person name="Larimer F."/>
            <person name="Land M."/>
            <person name="Hauser L."/>
            <person name="Kyrpides N."/>
            <person name="Kim E."/>
            <person name="Hemme C."/>
            <person name="Fields M.W."/>
            <person name="He Z."/>
            <person name="Zhou J."/>
            <person name="Richardson P."/>
        </authorList>
    </citation>
    <scope>NUCLEOTIDE SEQUENCE [LARGE SCALE GENOMIC DNA]</scope>
    <source>
        <strain>X514</strain>
    </source>
</reference>
<organism>
    <name type="scientific">Thermoanaerobacter sp. (strain X514)</name>
    <dbReference type="NCBI Taxonomy" id="399726"/>
    <lineage>
        <taxon>Bacteria</taxon>
        <taxon>Bacillati</taxon>
        <taxon>Bacillota</taxon>
        <taxon>Clostridia</taxon>
        <taxon>Thermoanaerobacterales</taxon>
        <taxon>Thermoanaerobacteraceae</taxon>
        <taxon>Thermoanaerobacter</taxon>
    </lineage>
</organism>
<comment type="function">
    <text evidence="1">Catalyzes the reversible isomerization-deamination of glucosamine 6-phosphate (GlcN6P) to form fructose 6-phosphate (Fru6P) and ammonium ion.</text>
</comment>
<comment type="catalytic activity">
    <reaction evidence="1">
        <text>alpha-D-glucosamine 6-phosphate + H2O = beta-D-fructose 6-phosphate + NH4(+)</text>
        <dbReference type="Rhea" id="RHEA:12172"/>
        <dbReference type="ChEBI" id="CHEBI:15377"/>
        <dbReference type="ChEBI" id="CHEBI:28938"/>
        <dbReference type="ChEBI" id="CHEBI:57634"/>
        <dbReference type="ChEBI" id="CHEBI:75989"/>
        <dbReference type="EC" id="3.5.99.6"/>
    </reaction>
</comment>
<comment type="pathway">
    <text evidence="1">Amino-sugar metabolism; N-acetylneuraminate degradation; D-fructose 6-phosphate from N-acetylneuraminate: step 5/5.</text>
</comment>
<comment type="similarity">
    <text evidence="1">Belongs to the glucosamine/galactosamine-6-phosphate isomerase family. NagB subfamily.</text>
</comment>
<accession>B0K0J7</accession>
<proteinExistence type="inferred from homology"/>
<evidence type="ECO:0000255" key="1">
    <source>
        <dbReference type="HAMAP-Rule" id="MF_01241"/>
    </source>
</evidence>